<keyword id="KW-0472">Membrane</keyword>
<keyword id="KW-0479">Metal-binding</keyword>
<keyword id="KW-0576">Peroxisome</keyword>
<keyword id="KW-0962">Peroxisome biogenesis</keyword>
<keyword id="KW-0653">Protein transport</keyword>
<keyword id="KW-1185">Reference proteome</keyword>
<keyword id="KW-0812">Transmembrane</keyword>
<keyword id="KW-1133">Transmembrane helix</keyword>
<keyword id="KW-0813">Transport</keyword>
<keyword id="KW-0833">Ubl conjugation pathway</keyword>
<keyword id="KW-0862">Zinc</keyword>
<keyword id="KW-0863">Zinc-finger</keyword>
<reference key="1">
    <citation type="journal article" date="2000" name="Nature">
        <title>Sequence and analysis of chromosome 3 of the plant Arabidopsis thaliana.</title>
        <authorList>
            <person name="Salanoubat M."/>
            <person name="Lemcke K."/>
            <person name="Rieger M."/>
            <person name="Ansorge W."/>
            <person name="Unseld M."/>
            <person name="Fartmann B."/>
            <person name="Valle G."/>
            <person name="Bloecker H."/>
            <person name="Perez-Alonso M."/>
            <person name="Obermaier B."/>
            <person name="Delseny M."/>
            <person name="Boutry M."/>
            <person name="Grivell L.A."/>
            <person name="Mache R."/>
            <person name="Puigdomenech P."/>
            <person name="De Simone V."/>
            <person name="Choisne N."/>
            <person name="Artiguenave F."/>
            <person name="Robert C."/>
            <person name="Brottier P."/>
            <person name="Wincker P."/>
            <person name="Cattolico L."/>
            <person name="Weissenbach J."/>
            <person name="Saurin W."/>
            <person name="Quetier F."/>
            <person name="Schaefer M."/>
            <person name="Mueller-Auer S."/>
            <person name="Gabel C."/>
            <person name="Fuchs M."/>
            <person name="Benes V."/>
            <person name="Wurmbach E."/>
            <person name="Drzonek H."/>
            <person name="Erfle H."/>
            <person name="Jordan N."/>
            <person name="Bangert S."/>
            <person name="Wiedelmann R."/>
            <person name="Kranz H."/>
            <person name="Voss H."/>
            <person name="Holland R."/>
            <person name="Brandt P."/>
            <person name="Nyakatura G."/>
            <person name="Vezzi A."/>
            <person name="D'Angelo M."/>
            <person name="Pallavicini A."/>
            <person name="Toppo S."/>
            <person name="Simionati B."/>
            <person name="Conrad A."/>
            <person name="Hornischer K."/>
            <person name="Kauer G."/>
            <person name="Loehnert T.-H."/>
            <person name="Nordsiek G."/>
            <person name="Reichelt J."/>
            <person name="Scharfe M."/>
            <person name="Schoen O."/>
            <person name="Bargues M."/>
            <person name="Terol J."/>
            <person name="Climent J."/>
            <person name="Navarro P."/>
            <person name="Collado C."/>
            <person name="Perez-Perez A."/>
            <person name="Ottenwaelder B."/>
            <person name="Duchemin D."/>
            <person name="Cooke R."/>
            <person name="Laudie M."/>
            <person name="Berger-Llauro C."/>
            <person name="Purnelle B."/>
            <person name="Masuy D."/>
            <person name="de Haan M."/>
            <person name="Maarse A.C."/>
            <person name="Alcaraz J.-P."/>
            <person name="Cottet A."/>
            <person name="Casacuberta E."/>
            <person name="Monfort A."/>
            <person name="Argiriou A."/>
            <person name="Flores M."/>
            <person name="Liguori R."/>
            <person name="Vitale D."/>
            <person name="Mannhaupt G."/>
            <person name="Haase D."/>
            <person name="Schoof H."/>
            <person name="Rudd S."/>
            <person name="Zaccaria P."/>
            <person name="Mewes H.-W."/>
            <person name="Mayer K.F.X."/>
            <person name="Kaul S."/>
            <person name="Town C.D."/>
            <person name="Koo H.L."/>
            <person name="Tallon L.J."/>
            <person name="Jenkins J."/>
            <person name="Rooney T."/>
            <person name="Rizzo M."/>
            <person name="Walts A."/>
            <person name="Utterback T."/>
            <person name="Fujii C.Y."/>
            <person name="Shea T.P."/>
            <person name="Creasy T.H."/>
            <person name="Haas B."/>
            <person name="Maiti R."/>
            <person name="Wu D."/>
            <person name="Peterson J."/>
            <person name="Van Aken S."/>
            <person name="Pai G."/>
            <person name="Militscher J."/>
            <person name="Sellers P."/>
            <person name="Gill J.E."/>
            <person name="Feldblyum T.V."/>
            <person name="Preuss D."/>
            <person name="Lin X."/>
            <person name="Nierman W.C."/>
            <person name="Salzberg S.L."/>
            <person name="White O."/>
            <person name="Venter J.C."/>
            <person name="Fraser C.M."/>
            <person name="Kaneko T."/>
            <person name="Nakamura Y."/>
            <person name="Sato S."/>
            <person name="Kato T."/>
            <person name="Asamizu E."/>
            <person name="Sasamoto S."/>
            <person name="Kimura T."/>
            <person name="Idesawa K."/>
            <person name="Kawashima K."/>
            <person name="Kishida Y."/>
            <person name="Kiyokawa C."/>
            <person name="Kohara M."/>
            <person name="Matsumoto M."/>
            <person name="Matsuno A."/>
            <person name="Muraki A."/>
            <person name="Nakayama S."/>
            <person name="Nakazaki N."/>
            <person name="Shinpo S."/>
            <person name="Takeuchi C."/>
            <person name="Wada T."/>
            <person name="Watanabe A."/>
            <person name="Yamada M."/>
            <person name="Yasuda M."/>
            <person name="Tabata S."/>
        </authorList>
    </citation>
    <scope>NUCLEOTIDE SEQUENCE [LARGE SCALE GENOMIC DNA]</scope>
    <source>
        <strain>cv. Columbia</strain>
    </source>
</reference>
<reference key="2">
    <citation type="journal article" date="2017" name="Plant J.">
        <title>Araport11: a complete reannotation of the Arabidopsis thaliana reference genome.</title>
        <authorList>
            <person name="Cheng C.Y."/>
            <person name="Krishnakumar V."/>
            <person name="Chan A.P."/>
            <person name="Thibaud-Nissen F."/>
            <person name="Schobel S."/>
            <person name="Town C.D."/>
        </authorList>
    </citation>
    <scope>GENOME REANNOTATION</scope>
    <source>
        <strain>cv. Columbia</strain>
    </source>
</reference>
<reference key="3">
    <citation type="journal article" date="2004" name="Genome Res.">
        <title>Whole genome sequence comparisons and 'full-length' cDNA sequences: a combined approach to evaluate and improve Arabidopsis genome annotation.</title>
        <authorList>
            <person name="Castelli V."/>
            <person name="Aury J.-M."/>
            <person name="Jaillon O."/>
            <person name="Wincker P."/>
            <person name="Clepet C."/>
            <person name="Menard M."/>
            <person name="Cruaud C."/>
            <person name="Quetier F."/>
            <person name="Scarpelli C."/>
            <person name="Schaechter V."/>
            <person name="Temple G."/>
            <person name="Caboche M."/>
            <person name="Weissenbach J."/>
            <person name="Salanoubat M."/>
        </authorList>
    </citation>
    <scope>NUCLEOTIDE SEQUENCE [LARGE SCALE MRNA]</scope>
    <source>
        <strain>cv. Columbia</strain>
    </source>
</reference>
<reference key="4">
    <citation type="journal article" date="2002" name="Science">
        <title>Functional annotation of a full-length Arabidopsis cDNA collection.</title>
        <authorList>
            <person name="Seki M."/>
            <person name="Narusaka M."/>
            <person name="Kamiya A."/>
            <person name="Ishida J."/>
            <person name="Satou M."/>
            <person name="Sakurai T."/>
            <person name="Nakajima M."/>
            <person name="Enju A."/>
            <person name="Akiyama K."/>
            <person name="Oono Y."/>
            <person name="Muramatsu M."/>
            <person name="Hayashizaki Y."/>
            <person name="Kawai J."/>
            <person name="Carninci P."/>
            <person name="Itoh M."/>
            <person name="Ishii Y."/>
            <person name="Arakawa T."/>
            <person name="Shibata K."/>
            <person name="Shinagawa A."/>
            <person name="Shinozaki K."/>
        </authorList>
    </citation>
    <scope>NUCLEOTIDE SEQUENCE [LARGE SCALE MRNA] OF 92-393</scope>
    <source>
        <strain>cv. Columbia</strain>
    </source>
</reference>
<reference key="5">
    <citation type="journal article" date="2005" name="Plant Physiol.">
        <title>The Arabidopsis PEX12 gene is required for peroxisome biogenesis and is essential for development.</title>
        <authorList>
            <person name="Fan J."/>
            <person name="Quan S."/>
            <person name="Orth T."/>
            <person name="Awai C."/>
            <person name="Chory J."/>
            <person name="Hu J."/>
        </authorList>
    </citation>
    <scope>FUNCTION</scope>
    <scope>TISSUE SPECIFICITY</scope>
    <scope>DISRUPTION PHENOTYPE</scope>
</reference>
<reference key="6">
    <citation type="journal article" date="2006" name="Plant J.">
        <title>The Arabidopsis pex12 and pex13 mutants are defective in both PTS1- and PTS2-dependent protein transport to peroxisomes.</title>
        <authorList>
            <person name="Mano S."/>
            <person name="Nakamori C."/>
            <person name="Nito K."/>
            <person name="Kondo M."/>
            <person name="Nishimura M."/>
        </authorList>
    </citation>
    <scope>FUNCTION</scope>
    <scope>SUBCELLULAR LOCATION</scope>
    <scope>MUTAGENESIS OF ARG-170</scope>
</reference>
<reference key="7">
    <citation type="journal article" date="2007" name="Plant Cell Physiol.">
        <title>Functional classification of Arabidopsis peroxisome biogenesis factors proposed from analyses of knockdown mutants.</title>
        <authorList>
            <person name="Nito K."/>
            <person name="Kamigaki A."/>
            <person name="Kondo M."/>
            <person name="Hayashi M."/>
            <person name="Nishimura M."/>
        </authorList>
    </citation>
    <scope>FUNCTION</scope>
</reference>
<reference key="8">
    <citation type="journal article" date="2009" name="Plant J.">
        <title>Molecular components required for the targeting of PEX7 to peroxisomes in Arabidopsis thaliana.</title>
        <authorList>
            <person name="Singh T."/>
            <person name="Hayashi M."/>
            <person name="Mano S."/>
            <person name="Arai Y."/>
            <person name="Goto S."/>
            <person name="Nishimura M."/>
        </authorList>
    </citation>
    <scope>FUNCTION</scope>
    <scope>INTERACTION WITH PEX7</scope>
</reference>
<reference key="9">
    <citation type="journal article" date="2010" name="Proc. Natl. Acad. Sci. U.S.A.">
        <title>Different functions of the C3HC4 zinc RING finger peroxins PEX10, PEX2, and PEX12 in peroxisome formation and matrix protein import.</title>
        <authorList>
            <person name="Prestele J."/>
            <person name="Hierl G."/>
            <person name="Scherling C."/>
            <person name="Hetkamp S."/>
            <person name="Schwechheimer C."/>
            <person name="Isono E."/>
            <person name="Weckwerth W."/>
            <person name="Wanner G."/>
            <person name="Gietl C."/>
        </authorList>
    </citation>
    <scope>FUNCTION</scope>
</reference>
<reference key="10">
    <citation type="journal article" date="2013" name="J. Integr. Plant Biol.">
        <title>Arabidopsis RING peroxins are E3 ubiquitin ligases that interact with two homologous ubiquitin receptor proteins(F).</title>
        <authorList>
            <person name="Kaur N."/>
            <person name="Zhao Q."/>
            <person name="Xie Q."/>
            <person name="Hu J."/>
        </authorList>
    </citation>
    <scope>INTERACTION WITH DSK2A AND DSK2B</scope>
    <scope>FUNCTION</scope>
</reference>
<protein>
    <recommendedName>
        <fullName evidence="11">Peroxisome biogenesis protein 12</fullName>
    </recommendedName>
    <alternativeName>
        <fullName evidence="11">Peroxin-12</fullName>
        <shortName>AtPEX12</shortName>
    </alternativeName>
    <alternativeName>
        <fullName>Pex12p</fullName>
    </alternativeName>
    <alternativeName>
        <fullName>Protein ABERRANT PEROXISOME MORPHOLOGY 4</fullName>
    </alternativeName>
</protein>
<accession>Q9M841</accession>
<accession>Q8GYG2</accession>
<comment type="function">
    <text evidence="2 3 5 6 7 8 9 10">Component of a retrotranslocation channel required for peroxisome organization by mediating export of the PEX5 receptor from peroxisomes to the cytosol, thereby promoting PEX5 recycling (PubMed:16113209, PubMed:16813573, PubMed:17478547, PubMed:19594707, PubMed:20679226, PubMed:23336935). The retrotranslocation channel is composed of PEX2, PEX10 and PEX12; each subunit contributing transmembrane segments that coassemble into an open channel that specifically allows the passage of PEX5 through the peroxisomal membrane (By similarity). PEX12 also regulates PEX5 recycling by activating the E3 ubiquitin-protein ligase activity of PEX10 (By similarity). When PEX5 recycling is compromised, PEX12 stimulates PEX10-mediated polyubiquitination of PEX5, leading to its subsequent degradation (By similarity).</text>
</comment>
<comment type="pathway">
    <text evidence="2">Protein modification; protein ubiquitination.</text>
</comment>
<comment type="subunit">
    <text evidence="2 8 10">Component of the PEX2-PEX10-PEX12 retrotranslocation channel (By similarity). Interacts (via C-terminus) with PEX7 (PubMed:19594707). Interacts with DSK2a and DSK2b (PubMed:23336935).</text>
</comment>
<comment type="subcellular location">
    <subcellularLocation>
        <location evidence="2">Peroxisome membrane</location>
        <topology evidence="4">Multi-pass membrane protein</topology>
    </subcellularLocation>
</comment>
<comment type="tissue specificity">
    <text evidence="5">Expressed in young seedlings, roots, leaves, seeds and flowers.</text>
</comment>
<comment type="domain">
    <text evidence="1">The three subunits of the retrotranslocation channel (PEX2, PEX10 and PEX12) coassemble in the membrane into a channel with an open 10 Angstrom pore. The RING-type zinc-fingers that catalyze PEX5 receptor ubiquitination are positioned above the pore on the cytosolic side of the complex.</text>
</comment>
<comment type="domain">
    <text evidence="3">The RING-type zinc-finger is degenerated and only coordinates one zinc ions, preventing E3 ubiquitin-protein ligase activity.</text>
</comment>
<comment type="disruption phenotype">
    <text evidence="5">Embryo lethality at the heart stage.</text>
</comment>
<comment type="similarity">
    <text evidence="11">Belongs to the pex2/pex10/pex12 family.</text>
</comment>
<comment type="sequence caution" evidence="11">
    <conflict type="erroneous gene model prediction">
        <sequence resource="EMBL-CDS" id="AAF63777"/>
    </conflict>
</comment>
<comment type="sequence caution" evidence="11">
    <conflict type="erroneous initiation">
        <sequence resource="EMBL-CDS" id="BAC42305"/>
    </conflict>
    <text>Truncated N-terminus.</text>
</comment>
<name>PEX12_ARATH</name>
<gene>
    <name type="primary">PEX12</name>
    <name type="synonym">APM4</name>
    <name type="ordered locus">At3g04460</name>
    <name type="ORF">T27C4.11</name>
</gene>
<feature type="chain" id="PRO_0000218615" description="Peroxisome biogenesis protein 12">
    <location>
        <begin position="1"/>
        <end position="393"/>
    </location>
</feature>
<feature type="topological domain" description="Peroxisomal matrix" evidence="1">
    <location>
        <begin position="1"/>
        <end position="13"/>
    </location>
</feature>
<feature type="transmembrane region" description="Helical; Name=TM1" evidence="1">
    <location>
        <begin position="14"/>
        <end position="41"/>
    </location>
</feature>
<feature type="topological domain" description="Cytoplasmic" evidence="1">
    <location>
        <begin position="42"/>
        <end position="44"/>
    </location>
</feature>
<feature type="transmembrane region" description="Helical; Name=TM2" evidence="1">
    <location>
        <begin position="45"/>
        <end position="69"/>
    </location>
</feature>
<feature type="topological domain" description="Peroxisomal matrix" evidence="1">
    <location>
        <begin position="70"/>
        <end position="110"/>
    </location>
</feature>
<feature type="transmembrane region" description="Helical; Name=TM3" evidence="1">
    <location>
        <begin position="111"/>
        <end position="148"/>
    </location>
</feature>
<feature type="topological domain" description="Cytoplasmic" evidence="1">
    <location>
        <begin position="149"/>
        <end position="168"/>
    </location>
</feature>
<feature type="transmembrane region" description="Helical; Name=TM4" evidence="1">
    <location>
        <begin position="169"/>
        <end position="214"/>
    </location>
</feature>
<feature type="topological domain" description="Peroxisomal matrix" evidence="1">
    <location>
        <begin position="215"/>
        <end position="285"/>
    </location>
</feature>
<feature type="transmembrane region" description="Helical; Name=TM5" evidence="1">
    <location>
        <begin position="286"/>
        <end position="312"/>
    </location>
</feature>
<feature type="topological domain" description="Cytoplasmic" evidence="1">
    <location>
        <begin position="313"/>
        <end position="393"/>
    </location>
</feature>
<feature type="zinc finger region" description="RING-type; degenerate">
    <location>
        <begin position="339"/>
        <end position="378"/>
    </location>
</feature>
<feature type="binding site" evidence="1">
    <location>
        <position position="339"/>
    </location>
    <ligand>
        <name>Zn(2+)</name>
        <dbReference type="ChEBI" id="CHEBI:29105"/>
    </ligand>
</feature>
<feature type="binding site" evidence="1">
    <location>
        <position position="342"/>
    </location>
    <ligand>
        <name>Zn(2+)</name>
        <dbReference type="ChEBI" id="CHEBI:29105"/>
    </ligand>
</feature>
<feature type="binding site" evidence="1">
    <location>
        <position position="360"/>
    </location>
    <ligand>
        <name>Zn(2+)</name>
        <dbReference type="ChEBI" id="CHEBI:29105"/>
    </ligand>
</feature>
<feature type="binding site" evidence="1">
    <location>
        <position position="363"/>
    </location>
    <ligand>
        <name>Zn(2+)</name>
        <dbReference type="ChEBI" id="CHEBI:29105"/>
    </ligand>
</feature>
<feature type="mutagenesis site" description="In apm4; reduced protein transport to peroxisome and repressed plant growth." evidence="6">
    <original>R</original>
    <variation>K</variation>
    <location>
        <position position="170"/>
    </location>
</feature>
<feature type="sequence conflict" description="In Ref. 3; BX824646." evidence="11" ref="3">
    <original>A</original>
    <variation>S</variation>
    <location>
        <position position="96"/>
    </location>
</feature>
<feature type="sequence conflict" description="In Ref. 3; BX824646." evidence="11" ref="3">
    <original>D</original>
    <variation>E</variation>
    <location>
        <position position="392"/>
    </location>
</feature>
<organism>
    <name type="scientific">Arabidopsis thaliana</name>
    <name type="common">Mouse-ear cress</name>
    <dbReference type="NCBI Taxonomy" id="3702"/>
    <lineage>
        <taxon>Eukaryota</taxon>
        <taxon>Viridiplantae</taxon>
        <taxon>Streptophyta</taxon>
        <taxon>Embryophyta</taxon>
        <taxon>Tracheophyta</taxon>
        <taxon>Spermatophyta</taxon>
        <taxon>Magnoliopsida</taxon>
        <taxon>eudicotyledons</taxon>
        <taxon>Gunneridae</taxon>
        <taxon>Pentapetalae</taxon>
        <taxon>rosids</taxon>
        <taxon>malvids</taxon>
        <taxon>Brassicales</taxon>
        <taxon>Brassicaceae</taxon>
        <taxon>Camelineae</taxon>
        <taxon>Arabidopsis</taxon>
    </lineage>
</organism>
<dbReference type="EMBL" id="AC022287">
    <property type="protein sequence ID" value="AAF63777.1"/>
    <property type="status" value="ALT_SEQ"/>
    <property type="molecule type" value="Genomic_DNA"/>
</dbReference>
<dbReference type="EMBL" id="CP002686">
    <property type="protein sequence ID" value="AEE74085.1"/>
    <property type="molecule type" value="Genomic_DNA"/>
</dbReference>
<dbReference type="EMBL" id="BX824646">
    <property type="status" value="NOT_ANNOTATED_CDS"/>
    <property type="molecule type" value="mRNA"/>
</dbReference>
<dbReference type="EMBL" id="AK117651">
    <property type="protein sequence ID" value="BAC42305.1"/>
    <property type="status" value="ALT_INIT"/>
    <property type="molecule type" value="mRNA"/>
</dbReference>
<dbReference type="RefSeq" id="NP_187096.2">
    <property type="nucleotide sequence ID" value="NM_111317.4"/>
</dbReference>
<dbReference type="SMR" id="Q9M841"/>
<dbReference type="BioGRID" id="4937">
    <property type="interactions" value="2"/>
</dbReference>
<dbReference type="FunCoup" id="Q9M841">
    <property type="interactions" value="4310"/>
</dbReference>
<dbReference type="IntAct" id="Q9M841">
    <property type="interactions" value="7"/>
</dbReference>
<dbReference type="STRING" id="3702.Q9M841"/>
<dbReference type="TCDB" id="3.A.20.1.2">
    <property type="family name" value="the peroxisomal protein importer (ppi) family"/>
</dbReference>
<dbReference type="PaxDb" id="3702-AT3G04460.1"/>
<dbReference type="ProteomicsDB" id="236429"/>
<dbReference type="EnsemblPlants" id="AT3G04460.1">
    <property type="protein sequence ID" value="AT3G04460.1"/>
    <property type="gene ID" value="AT3G04460"/>
</dbReference>
<dbReference type="GeneID" id="819602"/>
<dbReference type="Gramene" id="AT3G04460.1">
    <property type="protein sequence ID" value="AT3G04460.1"/>
    <property type="gene ID" value="AT3G04460"/>
</dbReference>
<dbReference type="KEGG" id="ath:AT3G04460"/>
<dbReference type="Araport" id="AT3G04460"/>
<dbReference type="TAIR" id="AT3G04460">
    <property type="gene designation" value="PEX12"/>
</dbReference>
<dbReference type="eggNOG" id="KOG0826">
    <property type="taxonomic scope" value="Eukaryota"/>
</dbReference>
<dbReference type="HOGENOM" id="CLU_031067_1_1_1"/>
<dbReference type="InParanoid" id="Q9M841"/>
<dbReference type="OMA" id="QHYLARC"/>
<dbReference type="OrthoDB" id="107372at2759"/>
<dbReference type="PhylomeDB" id="Q9M841"/>
<dbReference type="UniPathway" id="UPA00143"/>
<dbReference type="PRO" id="PR:Q9M841"/>
<dbReference type="Proteomes" id="UP000006548">
    <property type="component" value="Chromosome 3"/>
</dbReference>
<dbReference type="ExpressionAtlas" id="Q9M841">
    <property type="expression patterns" value="baseline and differential"/>
</dbReference>
<dbReference type="GO" id="GO:0005778">
    <property type="term" value="C:peroxisomal membrane"/>
    <property type="evidence" value="ECO:0000314"/>
    <property type="project" value="TAIR"/>
</dbReference>
<dbReference type="GO" id="GO:0005777">
    <property type="term" value="C:peroxisome"/>
    <property type="evidence" value="ECO:0000314"/>
    <property type="project" value="TAIR"/>
</dbReference>
<dbReference type="GO" id="GO:0004842">
    <property type="term" value="F:ubiquitin-protein transferase activity"/>
    <property type="evidence" value="ECO:0000314"/>
    <property type="project" value="TAIR"/>
</dbReference>
<dbReference type="GO" id="GO:0008270">
    <property type="term" value="F:zinc ion binding"/>
    <property type="evidence" value="ECO:0007669"/>
    <property type="project" value="UniProtKB-KW"/>
</dbReference>
<dbReference type="GO" id="GO:0048598">
    <property type="term" value="P:embryonic morphogenesis"/>
    <property type="evidence" value="ECO:0000315"/>
    <property type="project" value="TAIR"/>
</dbReference>
<dbReference type="GO" id="GO:0006635">
    <property type="term" value="P:fatty acid beta-oxidation"/>
    <property type="evidence" value="ECO:0000315"/>
    <property type="project" value="TAIR"/>
</dbReference>
<dbReference type="GO" id="GO:0007031">
    <property type="term" value="P:peroxisome organization"/>
    <property type="evidence" value="ECO:0000315"/>
    <property type="project" value="TAIR"/>
</dbReference>
<dbReference type="GO" id="GO:0016558">
    <property type="term" value="P:protein import into peroxisome matrix"/>
    <property type="evidence" value="ECO:0000314"/>
    <property type="project" value="TAIR"/>
</dbReference>
<dbReference type="GO" id="GO:0006513">
    <property type="term" value="P:protein monoubiquitination"/>
    <property type="evidence" value="ECO:0000314"/>
    <property type="project" value="TAIR"/>
</dbReference>
<dbReference type="CDD" id="cd16451">
    <property type="entry name" value="mRING_PEX12"/>
    <property type="match status" value="1"/>
</dbReference>
<dbReference type="FunFam" id="3.30.40.10:FF:000357">
    <property type="entry name" value="Peroxisome biogenesis protein 12"/>
    <property type="match status" value="1"/>
</dbReference>
<dbReference type="Gene3D" id="3.30.40.10">
    <property type="entry name" value="Zinc/RING finger domain, C3HC4 (zinc finger)"/>
    <property type="match status" value="1"/>
</dbReference>
<dbReference type="InterPro" id="IPR017375">
    <property type="entry name" value="PEX12"/>
</dbReference>
<dbReference type="InterPro" id="IPR006845">
    <property type="entry name" value="Pex_N"/>
</dbReference>
<dbReference type="InterPro" id="IPR013083">
    <property type="entry name" value="Znf_RING/FYVE/PHD"/>
</dbReference>
<dbReference type="PANTHER" id="PTHR12888:SF0">
    <property type="entry name" value="PEROXISOME ASSEMBLY PROTEIN 12"/>
    <property type="match status" value="1"/>
</dbReference>
<dbReference type="PANTHER" id="PTHR12888">
    <property type="entry name" value="PEROXISOME ASSEMBLY PROTEIN 12 PEROXIN-12"/>
    <property type="match status" value="1"/>
</dbReference>
<dbReference type="Pfam" id="PF04757">
    <property type="entry name" value="Pex2_Pex12"/>
    <property type="match status" value="1"/>
</dbReference>
<dbReference type="PIRSF" id="PIRSF038074">
    <property type="entry name" value="Peroxisome_assembly_p12"/>
    <property type="match status" value="1"/>
</dbReference>
<dbReference type="SUPFAM" id="SSF57850">
    <property type="entry name" value="RING/U-box"/>
    <property type="match status" value="1"/>
</dbReference>
<sequence>MLFQVGGEGTRPTFFEMAAAQQLPASLRAALTYSLGVFALRRSFLHKILDYEDEFFAALMLILEGHSLRTTDGSFAESLYGLRRKSARLRLRKDSARKDSSEEVQHSGLEKRQRILSVVFLVVLPYFKSKLHAIYNKEREARLRESLWGAEDQGFDEADFFTGDDSIVSREPSGNEELSVRVQLATKIKKFIAVCYPWIHASSEGLSFTYQLLYLLDATGFYSLGLQALGIQVCRATGQELMDTSSRISKIRNHERERLRGPPWLKTVQGALLSCSYAVLDYAQTGLIAAVFIFKMMEWWYQSAEERLSAPTVYPPPPPPPAPKMAKEGIPLPPDRSLCALCLQKRANPSVVTVSGFVFCYSCVFKYVSKYKRCPVTLIPASVDQIRRLFQDT</sequence>
<proteinExistence type="evidence at protein level"/>
<evidence type="ECO:0000250" key="1">
    <source>
        <dbReference type="UniProtKB" id="G2Q5N0"/>
    </source>
</evidence>
<evidence type="ECO:0000250" key="2">
    <source>
        <dbReference type="UniProtKB" id="O00623"/>
    </source>
</evidence>
<evidence type="ECO:0000250" key="3">
    <source>
        <dbReference type="UniProtKB" id="Q04370"/>
    </source>
</evidence>
<evidence type="ECO:0000255" key="4"/>
<evidence type="ECO:0000269" key="5">
    <source>
    </source>
</evidence>
<evidence type="ECO:0000269" key="6">
    <source>
    </source>
</evidence>
<evidence type="ECO:0000269" key="7">
    <source>
    </source>
</evidence>
<evidence type="ECO:0000269" key="8">
    <source>
    </source>
</evidence>
<evidence type="ECO:0000269" key="9">
    <source>
    </source>
</evidence>
<evidence type="ECO:0000269" key="10">
    <source>
    </source>
</evidence>
<evidence type="ECO:0000305" key="11"/>